<sequence>MKALLDLFKQVSQDEQFDAIKIGIASPEKIRSWSFGEVRKPETINYRTFKPERDGLFCAKIFGPIKDYECLCGKYKRLKHRGVICEKCGVEVTVAKVRRERMGHIELASPVAHIWFLKSLPSRLGMVLDMTLRDIERVLYFEAWCVIEPGMTPLKRGQIMSDDDFLAKTEEYGDDFRALMGAEAVRELLRTIDIDREVETLRGELKATSSEAKIKKISKRLKVLEGFQKSGIKAEWMVMEVLPVLPPDLRPLVPLDGGRFATSDLNDLYRRVINRNNRLKRLLELKAPEIILRNEKRMLQEAVDSLLDNGRRGKAMTGANKRQLKSLADMIKGKSGRFRQNLLGKRVDYSGRSVIVVGPQLKLHQCGLPKLMALELFKPFIFNRLEMMGLATTIKAAKKLVESQEPVVWDILEEVIREHPVMLNRAPTLHRLGIQAFEPVLIEGKAIQLHPLVCAAFNADFDGDQMAVHVPLSLEAQLEARTLMLASNNVLFPANGEPSIVPSQDIVLGLYYTTRERINGKGEGIFFADVSEVQRAYDNGEVELQTRITVRLTEYERDEQGEWQPVKHRHETTVGRALLSEILPKGLPFTVLNKALKKKEISRLINQSFRRCGLRDTVIFADKLMQSGFRLATRGGISIAMEDMLIPKAKEGILAEASREVKEIDKQYSSGLVTSQERYNNVVDIWGKAGDKVGKAMMEQLATEPVVNRHGEEVRQESFNSIYMMADSGARGSAAQIRQLAGMRGLMAKPDGSIIETPITANFREGLNVLQYFISTHGARKGLADTALKTANSGYLTRRLVDVTQDLVITEDDCGTSHGYAMKALVEGGEVIEPLRDRILGRVAAIDVVNPDTQETAIAAGTLLDEDLVDLIDRLGVDEVKVRTPLTCETRHGLCAHCYGRDLGRGSHVNVGEAVGVIAAQSIGEPGTQLTMRTFHIGGAASRSALASAVETKSNGTVGFASTMRYVTNAKGERVAISRSGELAIFDDNGRERERHKIPYGATVLVGDGEAVKAGTRLASWDPLTRPIVSEYSGAVRFENIEEGVTVAKQVDEVTGLSTLVVITPKTRGGKIVMRPQIKLVNENGEDVKIAGTDHSVNISFPVGALITVRDGQQVAVGEVLARIPQESQKTRDITGGLPRVAELFEARSPKDAGMLAEVTGTVSFGKDTKGKQRLVITDLEGVSHEFLILKEKQVLVHDGQVVNKGEMIVDGPADPHDILRLQGIEKLATYIVDEVQDVYRLQGVKINDKHIEVIVRQMLRRVNIVDPGDTEFIPGEQVERSELLNENDRVVAEDKRPASYDNVLLGITKASLSTDSFISAASFQETTRVLTEAAIMGKRDDLRGLKENVIVGRLIPAGTGLAYHIARKDKEALEAAEREAARQLANPFEDAPVTVGGEPEAPAADTPSDDSAE</sequence>
<comment type="function">
    <text evidence="1">DNA-dependent RNA polymerase catalyzes the transcription of DNA into RNA using the four ribonucleoside triphosphates as substrates.</text>
</comment>
<comment type="catalytic activity">
    <reaction evidence="1">
        <text>RNA(n) + a ribonucleoside 5'-triphosphate = RNA(n+1) + diphosphate</text>
        <dbReference type="Rhea" id="RHEA:21248"/>
        <dbReference type="Rhea" id="RHEA-COMP:14527"/>
        <dbReference type="Rhea" id="RHEA-COMP:17342"/>
        <dbReference type="ChEBI" id="CHEBI:33019"/>
        <dbReference type="ChEBI" id="CHEBI:61557"/>
        <dbReference type="ChEBI" id="CHEBI:140395"/>
        <dbReference type="EC" id="2.7.7.6"/>
    </reaction>
</comment>
<comment type="cofactor">
    <cofactor evidence="1">
        <name>Mg(2+)</name>
        <dbReference type="ChEBI" id="CHEBI:18420"/>
    </cofactor>
    <text evidence="1">Binds 1 Mg(2+) ion per subunit.</text>
</comment>
<comment type="cofactor">
    <cofactor evidence="1">
        <name>Zn(2+)</name>
        <dbReference type="ChEBI" id="CHEBI:29105"/>
    </cofactor>
    <text evidence="1">Binds 2 Zn(2+) ions per subunit.</text>
</comment>
<comment type="subunit">
    <text evidence="1">The RNAP catalytic core consists of 2 alpha, 1 beta, 1 beta' and 1 omega subunit. When a sigma factor is associated with the core the holoenzyme is formed, which can initiate transcription.</text>
</comment>
<comment type="similarity">
    <text evidence="1">Belongs to the RNA polymerase beta' chain family.</text>
</comment>
<evidence type="ECO:0000255" key="1">
    <source>
        <dbReference type="HAMAP-Rule" id="MF_01322"/>
    </source>
</evidence>
<evidence type="ECO:0000256" key="2">
    <source>
        <dbReference type="SAM" id="MobiDB-lite"/>
    </source>
</evidence>
<protein>
    <recommendedName>
        <fullName evidence="1">DNA-directed RNA polymerase subunit beta'</fullName>
        <shortName evidence="1">RNAP subunit beta'</shortName>
        <ecNumber evidence="1">2.7.7.6</ecNumber>
    </recommendedName>
    <alternativeName>
        <fullName evidence="1">RNA polymerase subunit beta'</fullName>
    </alternativeName>
    <alternativeName>
        <fullName evidence="1">Transcriptase subunit beta'</fullName>
    </alternativeName>
</protein>
<reference key="1">
    <citation type="journal article" date="2003" name="Nat. Genet.">
        <title>Comparative analysis of the genome sequences of Bordetella pertussis, Bordetella parapertussis and Bordetella bronchiseptica.</title>
        <authorList>
            <person name="Parkhill J."/>
            <person name="Sebaihia M."/>
            <person name="Preston A."/>
            <person name="Murphy L.D."/>
            <person name="Thomson N.R."/>
            <person name="Harris D.E."/>
            <person name="Holden M.T.G."/>
            <person name="Churcher C.M."/>
            <person name="Bentley S.D."/>
            <person name="Mungall K.L."/>
            <person name="Cerdeno-Tarraga A.-M."/>
            <person name="Temple L."/>
            <person name="James K.D."/>
            <person name="Harris B."/>
            <person name="Quail M.A."/>
            <person name="Achtman M."/>
            <person name="Atkin R."/>
            <person name="Baker S."/>
            <person name="Basham D."/>
            <person name="Bason N."/>
            <person name="Cherevach I."/>
            <person name="Chillingworth T."/>
            <person name="Collins M."/>
            <person name="Cronin A."/>
            <person name="Davis P."/>
            <person name="Doggett J."/>
            <person name="Feltwell T."/>
            <person name="Goble A."/>
            <person name="Hamlin N."/>
            <person name="Hauser H."/>
            <person name="Holroyd S."/>
            <person name="Jagels K."/>
            <person name="Leather S."/>
            <person name="Moule S."/>
            <person name="Norberczak H."/>
            <person name="O'Neil S."/>
            <person name="Ormond D."/>
            <person name="Price C."/>
            <person name="Rabbinowitsch E."/>
            <person name="Rutter S."/>
            <person name="Sanders M."/>
            <person name="Saunders D."/>
            <person name="Seeger K."/>
            <person name="Sharp S."/>
            <person name="Simmonds M."/>
            <person name="Skelton J."/>
            <person name="Squares R."/>
            <person name="Squares S."/>
            <person name="Stevens K."/>
            <person name="Unwin L."/>
            <person name="Whitehead S."/>
            <person name="Barrell B.G."/>
            <person name="Maskell D.J."/>
        </authorList>
    </citation>
    <scope>NUCLEOTIDE SEQUENCE [LARGE SCALE GENOMIC DNA]</scope>
    <source>
        <strain>12822 / ATCC BAA-587 / NCTC 13253</strain>
    </source>
</reference>
<dbReference type="EC" id="2.7.7.6" evidence="1"/>
<dbReference type="EMBL" id="BX640423">
    <property type="protein sequence ID" value="CAE39756.1"/>
    <property type="molecule type" value="Genomic_DNA"/>
</dbReference>
<dbReference type="RefSeq" id="WP_003818292.1">
    <property type="nucleotide sequence ID" value="NC_002928.3"/>
</dbReference>
<dbReference type="SMR" id="Q7W2G8"/>
<dbReference type="GeneID" id="69599922"/>
<dbReference type="GeneID" id="93206244"/>
<dbReference type="KEGG" id="bpa:BPP0015"/>
<dbReference type="HOGENOM" id="CLU_000524_3_1_4"/>
<dbReference type="Proteomes" id="UP000001421">
    <property type="component" value="Chromosome"/>
</dbReference>
<dbReference type="GO" id="GO:0000428">
    <property type="term" value="C:DNA-directed RNA polymerase complex"/>
    <property type="evidence" value="ECO:0007669"/>
    <property type="project" value="UniProtKB-KW"/>
</dbReference>
<dbReference type="GO" id="GO:0003677">
    <property type="term" value="F:DNA binding"/>
    <property type="evidence" value="ECO:0007669"/>
    <property type="project" value="UniProtKB-UniRule"/>
</dbReference>
<dbReference type="GO" id="GO:0003899">
    <property type="term" value="F:DNA-directed RNA polymerase activity"/>
    <property type="evidence" value="ECO:0007669"/>
    <property type="project" value="UniProtKB-UniRule"/>
</dbReference>
<dbReference type="GO" id="GO:0000287">
    <property type="term" value="F:magnesium ion binding"/>
    <property type="evidence" value="ECO:0007669"/>
    <property type="project" value="UniProtKB-UniRule"/>
</dbReference>
<dbReference type="GO" id="GO:0008270">
    <property type="term" value="F:zinc ion binding"/>
    <property type="evidence" value="ECO:0007669"/>
    <property type="project" value="UniProtKB-UniRule"/>
</dbReference>
<dbReference type="GO" id="GO:0006351">
    <property type="term" value="P:DNA-templated transcription"/>
    <property type="evidence" value="ECO:0007669"/>
    <property type="project" value="UniProtKB-UniRule"/>
</dbReference>
<dbReference type="CDD" id="cd02655">
    <property type="entry name" value="RNAP_beta'_C"/>
    <property type="match status" value="1"/>
</dbReference>
<dbReference type="CDD" id="cd01609">
    <property type="entry name" value="RNAP_beta'_N"/>
    <property type="match status" value="1"/>
</dbReference>
<dbReference type="FunFam" id="1.10.132.30:FF:000003">
    <property type="entry name" value="DNA-directed RNA polymerase subunit beta"/>
    <property type="match status" value="1"/>
</dbReference>
<dbReference type="FunFam" id="1.10.150.390:FF:000002">
    <property type="entry name" value="DNA-directed RNA polymerase subunit beta"/>
    <property type="match status" value="1"/>
</dbReference>
<dbReference type="FunFam" id="4.10.860.120:FF:000001">
    <property type="entry name" value="DNA-directed RNA polymerase subunit beta"/>
    <property type="match status" value="1"/>
</dbReference>
<dbReference type="Gene3D" id="1.10.132.30">
    <property type="match status" value="1"/>
</dbReference>
<dbReference type="Gene3D" id="1.10.150.390">
    <property type="match status" value="1"/>
</dbReference>
<dbReference type="Gene3D" id="1.10.1790.20">
    <property type="match status" value="1"/>
</dbReference>
<dbReference type="Gene3D" id="1.10.40.90">
    <property type="match status" value="1"/>
</dbReference>
<dbReference type="Gene3D" id="2.40.40.20">
    <property type="match status" value="1"/>
</dbReference>
<dbReference type="Gene3D" id="2.40.50.100">
    <property type="match status" value="3"/>
</dbReference>
<dbReference type="Gene3D" id="4.10.860.120">
    <property type="entry name" value="RNA polymerase II, clamp domain"/>
    <property type="match status" value="1"/>
</dbReference>
<dbReference type="Gene3D" id="1.10.274.100">
    <property type="entry name" value="RNA polymerase Rpb1, domain 3"/>
    <property type="match status" value="1"/>
</dbReference>
<dbReference type="HAMAP" id="MF_01322">
    <property type="entry name" value="RNApol_bact_RpoC"/>
    <property type="match status" value="1"/>
</dbReference>
<dbReference type="InterPro" id="IPR045867">
    <property type="entry name" value="DNA-dir_RpoC_beta_prime"/>
</dbReference>
<dbReference type="InterPro" id="IPR012754">
    <property type="entry name" value="DNA-dir_RpoC_beta_prime_bact"/>
</dbReference>
<dbReference type="InterPro" id="IPR000722">
    <property type="entry name" value="RNA_pol_asu"/>
</dbReference>
<dbReference type="InterPro" id="IPR006592">
    <property type="entry name" value="RNA_pol_N"/>
</dbReference>
<dbReference type="InterPro" id="IPR007080">
    <property type="entry name" value="RNA_pol_Rpb1_1"/>
</dbReference>
<dbReference type="InterPro" id="IPR007066">
    <property type="entry name" value="RNA_pol_Rpb1_3"/>
</dbReference>
<dbReference type="InterPro" id="IPR042102">
    <property type="entry name" value="RNA_pol_Rpb1_3_sf"/>
</dbReference>
<dbReference type="InterPro" id="IPR007083">
    <property type="entry name" value="RNA_pol_Rpb1_4"/>
</dbReference>
<dbReference type="InterPro" id="IPR007081">
    <property type="entry name" value="RNA_pol_Rpb1_5"/>
</dbReference>
<dbReference type="InterPro" id="IPR044893">
    <property type="entry name" value="RNA_pol_Rpb1_clamp_domain"/>
</dbReference>
<dbReference type="InterPro" id="IPR038120">
    <property type="entry name" value="Rpb1_funnel_sf"/>
</dbReference>
<dbReference type="NCBIfam" id="TIGR02386">
    <property type="entry name" value="rpoC_TIGR"/>
    <property type="match status" value="1"/>
</dbReference>
<dbReference type="PANTHER" id="PTHR19376">
    <property type="entry name" value="DNA-DIRECTED RNA POLYMERASE"/>
    <property type="match status" value="1"/>
</dbReference>
<dbReference type="PANTHER" id="PTHR19376:SF54">
    <property type="entry name" value="DNA-DIRECTED RNA POLYMERASE SUBUNIT BETA"/>
    <property type="match status" value="1"/>
</dbReference>
<dbReference type="Pfam" id="PF04997">
    <property type="entry name" value="RNA_pol_Rpb1_1"/>
    <property type="match status" value="1"/>
</dbReference>
<dbReference type="Pfam" id="PF00623">
    <property type="entry name" value="RNA_pol_Rpb1_2"/>
    <property type="match status" value="2"/>
</dbReference>
<dbReference type="Pfam" id="PF04983">
    <property type="entry name" value="RNA_pol_Rpb1_3"/>
    <property type="match status" value="1"/>
</dbReference>
<dbReference type="Pfam" id="PF05000">
    <property type="entry name" value="RNA_pol_Rpb1_4"/>
    <property type="match status" value="1"/>
</dbReference>
<dbReference type="Pfam" id="PF04998">
    <property type="entry name" value="RNA_pol_Rpb1_5"/>
    <property type="match status" value="1"/>
</dbReference>
<dbReference type="SMART" id="SM00663">
    <property type="entry name" value="RPOLA_N"/>
    <property type="match status" value="1"/>
</dbReference>
<dbReference type="SUPFAM" id="SSF64484">
    <property type="entry name" value="beta and beta-prime subunits of DNA dependent RNA-polymerase"/>
    <property type="match status" value="1"/>
</dbReference>
<feature type="chain" id="PRO_0000067713" description="DNA-directed RNA polymerase subunit beta'">
    <location>
        <begin position="1"/>
        <end position="1414"/>
    </location>
</feature>
<feature type="region of interest" description="Disordered" evidence="2">
    <location>
        <begin position="1378"/>
        <end position="1414"/>
    </location>
</feature>
<feature type="binding site" evidence="1">
    <location>
        <position position="70"/>
    </location>
    <ligand>
        <name>Zn(2+)</name>
        <dbReference type="ChEBI" id="CHEBI:29105"/>
        <label>1</label>
    </ligand>
</feature>
<feature type="binding site" evidence="1">
    <location>
        <position position="72"/>
    </location>
    <ligand>
        <name>Zn(2+)</name>
        <dbReference type="ChEBI" id="CHEBI:29105"/>
        <label>1</label>
    </ligand>
</feature>
<feature type="binding site" evidence="1">
    <location>
        <position position="85"/>
    </location>
    <ligand>
        <name>Zn(2+)</name>
        <dbReference type="ChEBI" id="CHEBI:29105"/>
        <label>1</label>
    </ligand>
</feature>
<feature type="binding site" evidence="1">
    <location>
        <position position="88"/>
    </location>
    <ligand>
        <name>Zn(2+)</name>
        <dbReference type="ChEBI" id="CHEBI:29105"/>
        <label>1</label>
    </ligand>
</feature>
<feature type="binding site" evidence="1">
    <location>
        <position position="460"/>
    </location>
    <ligand>
        <name>Mg(2+)</name>
        <dbReference type="ChEBI" id="CHEBI:18420"/>
    </ligand>
</feature>
<feature type="binding site" evidence="1">
    <location>
        <position position="462"/>
    </location>
    <ligand>
        <name>Mg(2+)</name>
        <dbReference type="ChEBI" id="CHEBI:18420"/>
    </ligand>
</feature>
<feature type="binding site" evidence="1">
    <location>
        <position position="464"/>
    </location>
    <ligand>
        <name>Mg(2+)</name>
        <dbReference type="ChEBI" id="CHEBI:18420"/>
    </ligand>
</feature>
<feature type="binding site" evidence="1">
    <location>
        <position position="814"/>
    </location>
    <ligand>
        <name>Zn(2+)</name>
        <dbReference type="ChEBI" id="CHEBI:29105"/>
        <label>2</label>
    </ligand>
</feature>
<feature type="binding site" evidence="1">
    <location>
        <position position="888"/>
    </location>
    <ligand>
        <name>Zn(2+)</name>
        <dbReference type="ChEBI" id="CHEBI:29105"/>
        <label>2</label>
    </ligand>
</feature>
<feature type="binding site" evidence="1">
    <location>
        <position position="895"/>
    </location>
    <ligand>
        <name>Zn(2+)</name>
        <dbReference type="ChEBI" id="CHEBI:29105"/>
        <label>2</label>
    </ligand>
</feature>
<feature type="binding site" evidence="1">
    <location>
        <position position="898"/>
    </location>
    <ligand>
        <name>Zn(2+)</name>
        <dbReference type="ChEBI" id="CHEBI:29105"/>
        <label>2</label>
    </ligand>
</feature>
<keyword id="KW-0240">DNA-directed RNA polymerase</keyword>
<keyword id="KW-0460">Magnesium</keyword>
<keyword id="KW-0479">Metal-binding</keyword>
<keyword id="KW-0548">Nucleotidyltransferase</keyword>
<keyword id="KW-0804">Transcription</keyword>
<keyword id="KW-0808">Transferase</keyword>
<keyword id="KW-0862">Zinc</keyword>
<organism>
    <name type="scientific">Bordetella parapertussis (strain 12822 / ATCC BAA-587 / NCTC 13253)</name>
    <dbReference type="NCBI Taxonomy" id="257311"/>
    <lineage>
        <taxon>Bacteria</taxon>
        <taxon>Pseudomonadati</taxon>
        <taxon>Pseudomonadota</taxon>
        <taxon>Betaproteobacteria</taxon>
        <taxon>Burkholderiales</taxon>
        <taxon>Alcaligenaceae</taxon>
        <taxon>Bordetella</taxon>
    </lineage>
</organism>
<gene>
    <name evidence="1" type="primary">rpoC</name>
    <name type="synonym">tabB</name>
    <name type="ordered locus">BPP0015</name>
</gene>
<accession>Q7W2G8</accession>
<proteinExistence type="inferred from homology"/>
<name>RPOC_BORPA</name>